<comment type="function">
    <text evidence="2">Transcriptional activator that increases RNA Pol II processivity, thereby increasing the level of full-length viral transcripts. Recognizes a hairpin structure at the 5'-LTR of the nascent viral mRNAs referred to as the transactivation responsive RNA element (TAR) and recruits the cyclin T1-CDK9 complex (P-TEFb complex) that will in turn hyperphosphorylate the RNA polymerase II to allow efficient elongation. The CDK9 component of P-TEFb and other Tat-activated kinases hyperphosphorylate the C-terminus of RNA Pol II that becomes stabilized and much more processive.</text>
</comment>
<comment type="function">
    <text evidence="1">Extracellular circulating Tat can be endocytosed by surrounding uninfected cells via the binding to several surface receptors. Endosomal low pH allows Tat to cross the endosome membrane to enter the cytosol and eventually further translocate into the nucleus, thereby inducing severe cell dysfunctions ranging from cell activation to cell death. Through (By similarity).</text>
</comment>
<comment type="subunit">
    <text evidence="1">Interacts with host CCNT1. Associates with the P-TEFb complex composed at least of Tat, P-TEFb (CDK9 and CCNT1), TAR RNA, RNA Pol II. Interacts with CCNT2; the resulting complex is unable to bind to TAR RNA (By similarity).</text>
</comment>
<comment type="subcellular location">
    <subcellularLocation>
        <location evidence="1">Host nucleus</location>
        <location evidence="1">Host nucleolus</location>
    </subcellularLocation>
</comment>
<comment type="similarity">
    <text evidence="5">Belongs to the lentiviruses Tat family.</text>
</comment>
<evidence type="ECO:0000250" key="1"/>
<evidence type="ECO:0000250" key="2">
    <source>
        <dbReference type="UniProtKB" id="P04608"/>
    </source>
</evidence>
<evidence type="ECO:0000255" key="3"/>
<evidence type="ECO:0000256" key="4">
    <source>
        <dbReference type="SAM" id="MobiDB-lite"/>
    </source>
</evidence>
<evidence type="ECO:0000305" key="5"/>
<feature type="chain" id="PRO_0000085385" description="Protein Tat">
    <location>
        <begin position="1"/>
        <end position="106"/>
    </location>
</feature>
<feature type="region of interest" description="Cysteine-rich" evidence="1">
    <location>
        <begin position="25"/>
        <end position="41"/>
    </location>
</feature>
<feature type="region of interest" description="Core" evidence="1">
    <location>
        <begin position="42"/>
        <end position="52"/>
    </location>
</feature>
<feature type="region of interest" description="Disordered" evidence="4">
    <location>
        <begin position="55"/>
        <end position="106"/>
    </location>
</feature>
<feature type="short sequence motif" description="Nuclear localization signal, and RNA-binding (TAR)" evidence="3">
    <location>
        <begin position="53"/>
        <end position="59"/>
    </location>
</feature>
<feature type="compositionally biased region" description="Basic residues" evidence="4">
    <location>
        <begin position="55"/>
        <end position="65"/>
    </location>
</feature>
<feature type="compositionally biased region" description="Polar residues" evidence="4">
    <location>
        <begin position="67"/>
        <end position="76"/>
    </location>
</feature>
<feature type="compositionally biased region" description="Basic and acidic residues" evidence="4">
    <location>
        <begin position="84"/>
        <end position="95"/>
    </location>
</feature>
<feature type="compositionally biased region" description="Low complexity" evidence="4">
    <location>
        <begin position="96"/>
        <end position="106"/>
    </location>
</feature>
<proteinExistence type="inferred from homology"/>
<dbReference type="PIR" id="A26737">
    <property type="entry name" value="TNLJS2"/>
</dbReference>
<dbReference type="GO" id="GO:0044196">
    <property type="term" value="C:host cell nucleolus"/>
    <property type="evidence" value="ECO:0007669"/>
    <property type="project" value="UniProtKB-SubCell"/>
</dbReference>
<dbReference type="GO" id="GO:0003723">
    <property type="term" value="F:RNA binding"/>
    <property type="evidence" value="ECO:0007669"/>
    <property type="project" value="UniProtKB-KW"/>
</dbReference>
<dbReference type="GO" id="GO:0001070">
    <property type="term" value="F:RNA-binding transcription regulator activity"/>
    <property type="evidence" value="ECO:0007669"/>
    <property type="project" value="InterPro"/>
</dbReference>
<dbReference type="GO" id="GO:0050434">
    <property type="term" value="P:positive regulation of viral transcription"/>
    <property type="evidence" value="ECO:0007669"/>
    <property type="project" value="InterPro"/>
</dbReference>
<dbReference type="Gene3D" id="4.10.20.10">
    <property type="entry name" value="Tat domain"/>
    <property type="match status" value="1"/>
</dbReference>
<dbReference type="InterPro" id="IPR001831">
    <property type="entry name" value="IV_Tat"/>
</dbReference>
<dbReference type="InterPro" id="IPR036963">
    <property type="entry name" value="Tat_dom_sf"/>
</dbReference>
<dbReference type="Pfam" id="PF00539">
    <property type="entry name" value="Tat"/>
    <property type="match status" value="1"/>
</dbReference>
<dbReference type="PRINTS" id="PR00055">
    <property type="entry name" value="HIVTATDOMAIN"/>
</dbReference>
<organism>
    <name type="scientific">Simian immunodeficiency virus (isolate K78)</name>
    <name type="common">SIV-mac</name>
    <name type="synonym">Simian immunodeficiency virus rhesus monkey</name>
    <dbReference type="NCBI Taxonomy" id="11736"/>
    <lineage>
        <taxon>Viruses</taxon>
        <taxon>Riboviria</taxon>
        <taxon>Pararnavirae</taxon>
        <taxon>Artverviricota</taxon>
        <taxon>Revtraviricetes</taxon>
        <taxon>Ortervirales</taxon>
        <taxon>Retroviridae</taxon>
        <taxon>Orthoretrovirinae</taxon>
        <taxon>Lentivirus</taxon>
        <taxon>Simian immunodeficiency virus</taxon>
    </lineage>
</organism>
<name>TAT_SIVML</name>
<keyword id="KW-0010">Activator</keyword>
<keyword id="KW-1048">Host nucleus</keyword>
<keyword id="KW-0945">Host-virus interaction</keyword>
<keyword id="KW-0694">RNA-binding</keyword>
<keyword id="KW-0804">Transcription</keyword>
<keyword id="KW-0805">Transcription regulation</keyword>
<gene>
    <name type="primary">tat</name>
</gene>
<organismHost>
    <name type="scientific">Cercopithecidae</name>
    <name type="common">Old World monkeys</name>
    <dbReference type="NCBI Taxonomy" id="9527"/>
</organismHost>
<reference key="1">
    <citation type="journal article" date="1987" name="Cell">
        <title>The genome organization of STLV-3 is similar to that of the AIDS virus except for a truncated transmembrane protein.</title>
        <authorList>
            <person name="Hirsch V."/>
            <person name="Riedel N."/>
            <person name="Mullins J.I."/>
        </authorList>
    </citation>
    <scope>NUCLEOTIDE SEQUENCE [GENOMIC RNA]</scope>
</reference>
<accession>P11263</accession>
<sequence>MQPLQNRPDLGEEILSQLYRPLEACYNTCYCKKCCYHCQFCFLKKGLGICYEQSRKRRRTPKKAKANTSSASNNRLIPNRTRHCQPEKAKKETVEKAVATAPGLGR</sequence>
<protein>
    <recommendedName>
        <fullName>Protein Tat</fullName>
    </recommendedName>
    <alternativeName>
        <fullName>Transactivating regulatory protein</fullName>
    </alternativeName>
</protein>